<sequence length="251" mass="27304">MLQTMKTLTLIPARLGSTRLPNKPLADICGKPMIVHVADRAAAAKLGRTVIATDSEEIFKVVAAHGHEAIMTRGDHESGSDRIYEALAKLDPSGEIDAVVNVQGDLPTIDPDTIRRALLPLEDGPADIATLGVEITVEEEKTNPNVVKIVGSPLAGNRRLRALYFTRATAPYGEGPLYHHIGLYAYRRSALERFVKLGPSPLEKREKLEQLRALEAGMRIDVEIVKTVPLGVDTQADLDRARTFCSQAGTI</sequence>
<reference key="1">
    <citation type="journal article" date="2005" name="Infect. Immun.">
        <title>Whole-genome analyses of speciation events in pathogenic Brucellae.</title>
        <authorList>
            <person name="Chain P.S."/>
            <person name="Comerci D.J."/>
            <person name="Tolmasky M.E."/>
            <person name="Larimer F.W."/>
            <person name="Malfatti S.A."/>
            <person name="Vergez L.M."/>
            <person name="Aguero F."/>
            <person name="Land M.L."/>
            <person name="Ugalde R.A."/>
            <person name="Garcia E."/>
        </authorList>
    </citation>
    <scope>NUCLEOTIDE SEQUENCE [LARGE SCALE GENOMIC DNA]</scope>
    <source>
        <strain>2308</strain>
    </source>
</reference>
<protein>
    <recommendedName>
        <fullName evidence="1">3-deoxy-manno-octulosonate cytidylyltransferase</fullName>
        <ecNumber evidence="1">2.7.7.38</ecNumber>
    </recommendedName>
    <alternativeName>
        <fullName evidence="1">CMP-2-keto-3-deoxyoctulosonic acid synthase</fullName>
        <shortName evidence="1">CKS</shortName>
        <shortName evidence="1">CMP-KDO synthase</shortName>
    </alternativeName>
</protein>
<keyword id="KW-0963">Cytoplasm</keyword>
<keyword id="KW-0448">Lipopolysaccharide biosynthesis</keyword>
<keyword id="KW-0548">Nucleotidyltransferase</keyword>
<keyword id="KW-1185">Reference proteome</keyword>
<keyword id="KW-0808">Transferase</keyword>
<organism>
    <name type="scientific">Brucella abortus (strain 2308)</name>
    <dbReference type="NCBI Taxonomy" id="359391"/>
    <lineage>
        <taxon>Bacteria</taxon>
        <taxon>Pseudomonadati</taxon>
        <taxon>Pseudomonadota</taxon>
        <taxon>Alphaproteobacteria</taxon>
        <taxon>Hyphomicrobiales</taxon>
        <taxon>Brucellaceae</taxon>
        <taxon>Brucella/Ochrobactrum group</taxon>
        <taxon>Brucella</taxon>
    </lineage>
</organism>
<name>KDSB_BRUA2</name>
<feature type="chain" id="PRO_0000370012" description="3-deoxy-manno-octulosonate cytidylyltransferase">
    <location>
        <begin position="1"/>
        <end position="251"/>
    </location>
</feature>
<dbReference type="EC" id="2.7.7.38" evidence="1"/>
<dbReference type="EMBL" id="AM040264">
    <property type="protein sequence ID" value="CAJ09991.1"/>
    <property type="molecule type" value="Genomic_DNA"/>
</dbReference>
<dbReference type="RefSeq" id="WP_002971781.1">
    <property type="nucleotide sequence ID" value="NZ_KN046823.1"/>
</dbReference>
<dbReference type="SMR" id="Q2YPQ5"/>
<dbReference type="STRING" id="359391.BAB1_0035"/>
<dbReference type="KEGG" id="bmf:BAB1_0035"/>
<dbReference type="HOGENOM" id="CLU_065038_0_1_5"/>
<dbReference type="PhylomeDB" id="Q2YPQ5"/>
<dbReference type="UniPathway" id="UPA00030"/>
<dbReference type="UniPathway" id="UPA00358">
    <property type="reaction ID" value="UER00476"/>
</dbReference>
<dbReference type="Proteomes" id="UP000002719">
    <property type="component" value="Chromosome I"/>
</dbReference>
<dbReference type="GO" id="GO:0005829">
    <property type="term" value="C:cytosol"/>
    <property type="evidence" value="ECO:0007669"/>
    <property type="project" value="TreeGrafter"/>
</dbReference>
<dbReference type="GO" id="GO:0008690">
    <property type="term" value="F:3-deoxy-manno-octulosonate cytidylyltransferase activity"/>
    <property type="evidence" value="ECO:0007669"/>
    <property type="project" value="UniProtKB-UniRule"/>
</dbReference>
<dbReference type="GO" id="GO:0033468">
    <property type="term" value="P:CMP-keto-3-deoxy-D-manno-octulosonic acid biosynthetic process"/>
    <property type="evidence" value="ECO:0007669"/>
    <property type="project" value="UniProtKB-UniRule"/>
</dbReference>
<dbReference type="GO" id="GO:0009103">
    <property type="term" value="P:lipopolysaccharide biosynthetic process"/>
    <property type="evidence" value="ECO:0007669"/>
    <property type="project" value="UniProtKB-UniRule"/>
</dbReference>
<dbReference type="CDD" id="cd02517">
    <property type="entry name" value="CMP-KDO-Synthetase"/>
    <property type="match status" value="1"/>
</dbReference>
<dbReference type="Gene3D" id="3.90.550.10">
    <property type="entry name" value="Spore Coat Polysaccharide Biosynthesis Protein SpsA, Chain A"/>
    <property type="match status" value="1"/>
</dbReference>
<dbReference type="HAMAP" id="MF_00057">
    <property type="entry name" value="KdsB"/>
    <property type="match status" value="1"/>
</dbReference>
<dbReference type="InterPro" id="IPR003329">
    <property type="entry name" value="Cytidylyl_trans"/>
</dbReference>
<dbReference type="InterPro" id="IPR004528">
    <property type="entry name" value="KdsB"/>
</dbReference>
<dbReference type="InterPro" id="IPR029044">
    <property type="entry name" value="Nucleotide-diphossugar_trans"/>
</dbReference>
<dbReference type="NCBIfam" id="TIGR00466">
    <property type="entry name" value="kdsB"/>
    <property type="match status" value="1"/>
</dbReference>
<dbReference type="NCBIfam" id="NF003948">
    <property type="entry name" value="PRK05450.1-1"/>
    <property type="match status" value="1"/>
</dbReference>
<dbReference type="NCBIfam" id="NF003952">
    <property type="entry name" value="PRK05450.1-5"/>
    <property type="match status" value="1"/>
</dbReference>
<dbReference type="PANTHER" id="PTHR42866">
    <property type="entry name" value="3-DEOXY-MANNO-OCTULOSONATE CYTIDYLYLTRANSFERASE"/>
    <property type="match status" value="1"/>
</dbReference>
<dbReference type="PANTHER" id="PTHR42866:SF2">
    <property type="entry name" value="3-DEOXY-MANNO-OCTULOSONATE CYTIDYLYLTRANSFERASE, MITOCHONDRIAL"/>
    <property type="match status" value="1"/>
</dbReference>
<dbReference type="Pfam" id="PF02348">
    <property type="entry name" value="CTP_transf_3"/>
    <property type="match status" value="1"/>
</dbReference>
<dbReference type="SUPFAM" id="SSF53448">
    <property type="entry name" value="Nucleotide-diphospho-sugar transferases"/>
    <property type="match status" value="1"/>
</dbReference>
<accession>Q2YPQ5</accession>
<comment type="function">
    <text evidence="1">Activates KDO (a required 8-carbon sugar) for incorporation into bacterial lipopolysaccharide in Gram-negative bacteria.</text>
</comment>
<comment type="catalytic activity">
    <reaction evidence="1">
        <text>3-deoxy-alpha-D-manno-oct-2-ulosonate + CTP = CMP-3-deoxy-beta-D-manno-octulosonate + diphosphate</text>
        <dbReference type="Rhea" id="RHEA:23448"/>
        <dbReference type="ChEBI" id="CHEBI:33019"/>
        <dbReference type="ChEBI" id="CHEBI:37563"/>
        <dbReference type="ChEBI" id="CHEBI:85986"/>
        <dbReference type="ChEBI" id="CHEBI:85987"/>
        <dbReference type="EC" id="2.7.7.38"/>
    </reaction>
</comment>
<comment type="pathway">
    <text evidence="1">Nucleotide-sugar biosynthesis; CMP-3-deoxy-D-manno-octulosonate biosynthesis; CMP-3-deoxy-D-manno-octulosonate from 3-deoxy-D-manno-octulosonate and CTP: step 1/1.</text>
</comment>
<comment type="pathway">
    <text evidence="1">Bacterial outer membrane biogenesis; lipopolysaccharide biosynthesis.</text>
</comment>
<comment type="subcellular location">
    <subcellularLocation>
        <location evidence="1">Cytoplasm</location>
    </subcellularLocation>
</comment>
<comment type="similarity">
    <text evidence="1">Belongs to the KdsB family.</text>
</comment>
<gene>
    <name evidence="1" type="primary">kdsB</name>
    <name type="ordered locus">BAB1_0035</name>
</gene>
<proteinExistence type="inferred from homology"/>
<evidence type="ECO:0000255" key="1">
    <source>
        <dbReference type="HAMAP-Rule" id="MF_00057"/>
    </source>
</evidence>